<keyword id="KW-0997">Cell inner membrane</keyword>
<keyword id="KW-1003">Cell membrane</keyword>
<keyword id="KW-0472">Membrane</keyword>
<comment type="function">
    <text evidence="1">Interacts with the SecY protein in vivo. May bind preferentially to an uncomplexed state of SecY, thus functioning either as a chelating agent for excess SecY in the cell or as a regulatory factor that negatively controls the translocase function.</text>
</comment>
<comment type="subcellular location">
    <subcellularLocation>
        <location evidence="1">Cell inner membrane</location>
        <topology evidence="1">Peripheral membrane protein</topology>
        <orientation evidence="1">Cytoplasmic side</orientation>
    </subcellularLocation>
    <text evidence="1">Loosely associated with the cytoplasmic side of the inner membrane, probably via SecY.</text>
</comment>
<comment type="similarity">
    <text evidence="1">Belongs to the Syd family.</text>
</comment>
<proteinExistence type="inferred from homology"/>
<sequence>MDELTAQALKAFTTRYCDAWQEKHGSWPLSEELYGVPSPCIISSTRDAVYWQPQPFEGEENVNAVERAFDIMVQPALHAFYTTQFAGDMPAQFADEKLTLLQTWSQDDFRRVQENLIGHLVTQKRLKLPPTLFIATQENELEVISVCNLSGEVIKETLGTRNRTVLAATLAEFLTQLNPLL</sequence>
<feature type="chain" id="PRO_1000137039" description="Protein Syd">
    <location>
        <begin position="1"/>
        <end position="181"/>
    </location>
</feature>
<dbReference type="EMBL" id="CP001113">
    <property type="protein sequence ID" value="ACF61444.1"/>
    <property type="molecule type" value="Genomic_DNA"/>
</dbReference>
<dbReference type="RefSeq" id="WP_000343990.1">
    <property type="nucleotide sequence ID" value="NZ_CCMR01000001.1"/>
</dbReference>
<dbReference type="SMR" id="B4T4W0"/>
<dbReference type="KEGG" id="see:SNSL254_A3190"/>
<dbReference type="HOGENOM" id="CLU_121866_0_0_6"/>
<dbReference type="Proteomes" id="UP000008824">
    <property type="component" value="Chromosome"/>
</dbReference>
<dbReference type="GO" id="GO:0009898">
    <property type="term" value="C:cytoplasmic side of plasma membrane"/>
    <property type="evidence" value="ECO:0007669"/>
    <property type="project" value="InterPro"/>
</dbReference>
<dbReference type="CDD" id="cd16323">
    <property type="entry name" value="Syd"/>
    <property type="match status" value="1"/>
</dbReference>
<dbReference type="Gene3D" id="3.40.1580.20">
    <property type="entry name" value="Syd protein"/>
    <property type="match status" value="1"/>
</dbReference>
<dbReference type="HAMAP" id="MF_01104">
    <property type="entry name" value="Syd"/>
    <property type="match status" value="1"/>
</dbReference>
<dbReference type="InterPro" id="IPR009948">
    <property type="entry name" value="Syd"/>
</dbReference>
<dbReference type="InterPro" id="IPR038228">
    <property type="entry name" value="Syd_sf"/>
</dbReference>
<dbReference type="NCBIfam" id="NF003439">
    <property type="entry name" value="PRK04968.1"/>
    <property type="match status" value="1"/>
</dbReference>
<dbReference type="Pfam" id="PF07348">
    <property type="entry name" value="Syd"/>
    <property type="match status" value="1"/>
</dbReference>
<organism>
    <name type="scientific">Salmonella newport (strain SL254)</name>
    <dbReference type="NCBI Taxonomy" id="423368"/>
    <lineage>
        <taxon>Bacteria</taxon>
        <taxon>Pseudomonadati</taxon>
        <taxon>Pseudomonadota</taxon>
        <taxon>Gammaproteobacteria</taxon>
        <taxon>Enterobacterales</taxon>
        <taxon>Enterobacteriaceae</taxon>
        <taxon>Salmonella</taxon>
    </lineage>
</organism>
<evidence type="ECO:0000255" key="1">
    <source>
        <dbReference type="HAMAP-Rule" id="MF_01104"/>
    </source>
</evidence>
<reference key="1">
    <citation type="journal article" date="2011" name="J. Bacteriol.">
        <title>Comparative genomics of 28 Salmonella enterica isolates: evidence for CRISPR-mediated adaptive sublineage evolution.</title>
        <authorList>
            <person name="Fricke W.F."/>
            <person name="Mammel M.K."/>
            <person name="McDermott P.F."/>
            <person name="Tartera C."/>
            <person name="White D.G."/>
            <person name="Leclerc J.E."/>
            <person name="Ravel J."/>
            <person name="Cebula T.A."/>
        </authorList>
    </citation>
    <scope>NUCLEOTIDE SEQUENCE [LARGE SCALE GENOMIC DNA]</scope>
    <source>
        <strain>SL254</strain>
    </source>
</reference>
<name>SYDP_SALNS</name>
<gene>
    <name evidence="1" type="primary">syd</name>
    <name type="ordered locus">SNSL254_A3190</name>
</gene>
<protein>
    <recommendedName>
        <fullName evidence="1">Protein Syd</fullName>
    </recommendedName>
</protein>
<accession>B4T4W0</accession>